<dbReference type="EMBL" id="AE017226">
    <property type="protein sequence ID" value="AAS11537.1"/>
    <property type="molecule type" value="Genomic_DNA"/>
</dbReference>
<dbReference type="RefSeq" id="NP_971656.1">
    <property type="nucleotide sequence ID" value="NC_002967.9"/>
</dbReference>
<dbReference type="RefSeq" id="WP_002670537.1">
    <property type="nucleotide sequence ID" value="NC_002967.9"/>
</dbReference>
<dbReference type="SMR" id="Q73NV4"/>
<dbReference type="STRING" id="243275.TDE_1048"/>
<dbReference type="PaxDb" id="243275-TDE_1048"/>
<dbReference type="GeneID" id="2741322"/>
<dbReference type="KEGG" id="tde:TDE_1048"/>
<dbReference type="PATRIC" id="fig|243275.7.peg.1008"/>
<dbReference type="eggNOG" id="COG0049">
    <property type="taxonomic scope" value="Bacteria"/>
</dbReference>
<dbReference type="HOGENOM" id="CLU_072226_1_1_12"/>
<dbReference type="OrthoDB" id="9807653at2"/>
<dbReference type="Proteomes" id="UP000008212">
    <property type="component" value="Chromosome"/>
</dbReference>
<dbReference type="GO" id="GO:0015935">
    <property type="term" value="C:small ribosomal subunit"/>
    <property type="evidence" value="ECO:0007669"/>
    <property type="project" value="InterPro"/>
</dbReference>
<dbReference type="GO" id="GO:0019843">
    <property type="term" value="F:rRNA binding"/>
    <property type="evidence" value="ECO:0007669"/>
    <property type="project" value="UniProtKB-UniRule"/>
</dbReference>
<dbReference type="GO" id="GO:0003735">
    <property type="term" value="F:structural constituent of ribosome"/>
    <property type="evidence" value="ECO:0007669"/>
    <property type="project" value="InterPro"/>
</dbReference>
<dbReference type="GO" id="GO:0000049">
    <property type="term" value="F:tRNA binding"/>
    <property type="evidence" value="ECO:0007669"/>
    <property type="project" value="UniProtKB-UniRule"/>
</dbReference>
<dbReference type="GO" id="GO:0006412">
    <property type="term" value="P:translation"/>
    <property type="evidence" value="ECO:0007669"/>
    <property type="project" value="UniProtKB-UniRule"/>
</dbReference>
<dbReference type="CDD" id="cd14869">
    <property type="entry name" value="uS7_Bacteria"/>
    <property type="match status" value="1"/>
</dbReference>
<dbReference type="FunFam" id="1.10.455.10:FF:000001">
    <property type="entry name" value="30S ribosomal protein S7"/>
    <property type="match status" value="1"/>
</dbReference>
<dbReference type="Gene3D" id="1.10.455.10">
    <property type="entry name" value="Ribosomal protein S7 domain"/>
    <property type="match status" value="1"/>
</dbReference>
<dbReference type="HAMAP" id="MF_00480_B">
    <property type="entry name" value="Ribosomal_uS7_B"/>
    <property type="match status" value="1"/>
</dbReference>
<dbReference type="InterPro" id="IPR000235">
    <property type="entry name" value="Ribosomal_uS7"/>
</dbReference>
<dbReference type="InterPro" id="IPR005717">
    <property type="entry name" value="Ribosomal_uS7_bac/org-type"/>
</dbReference>
<dbReference type="InterPro" id="IPR020606">
    <property type="entry name" value="Ribosomal_uS7_CS"/>
</dbReference>
<dbReference type="InterPro" id="IPR023798">
    <property type="entry name" value="Ribosomal_uS7_dom"/>
</dbReference>
<dbReference type="InterPro" id="IPR036823">
    <property type="entry name" value="Ribosomal_uS7_dom_sf"/>
</dbReference>
<dbReference type="NCBIfam" id="TIGR01029">
    <property type="entry name" value="rpsG_bact"/>
    <property type="match status" value="1"/>
</dbReference>
<dbReference type="PANTHER" id="PTHR11205">
    <property type="entry name" value="RIBOSOMAL PROTEIN S7"/>
    <property type="match status" value="1"/>
</dbReference>
<dbReference type="Pfam" id="PF00177">
    <property type="entry name" value="Ribosomal_S7"/>
    <property type="match status" value="1"/>
</dbReference>
<dbReference type="PIRSF" id="PIRSF002122">
    <property type="entry name" value="RPS7p_RPS7a_RPS5e_RPS7o"/>
    <property type="match status" value="1"/>
</dbReference>
<dbReference type="SUPFAM" id="SSF47973">
    <property type="entry name" value="Ribosomal protein S7"/>
    <property type="match status" value="1"/>
</dbReference>
<dbReference type="PROSITE" id="PS00052">
    <property type="entry name" value="RIBOSOMAL_S7"/>
    <property type="match status" value="1"/>
</dbReference>
<reference key="1">
    <citation type="journal article" date="2004" name="Proc. Natl. Acad. Sci. U.S.A.">
        <title>Comparison of the genome of the oral pathogen Treponema denticola with other spirochete genomes.</title>
        <authorList>
            <person name="Seshadri R."/>
            <person name="Myers G.S.A."/>
            <person name="Tettelin H."/>
            <person name="Eisen J.A."/>
            <person name="Heidelberg J.F."/>
            <person name="Dodson R.J."/>
            <person name="Davidsen T.M."/>
            <person name="DeBoy R.T."/>
            <person name="Fouts D.E."/>
            <person name="Haft D.H."/>
            <person name="Selengut J."/>
            <person name="Ren Q."/>
            <person name="Brinkac L.M."/>
            <person name="Madupu R."/>
            <person name="Kolonay J.F."/>
            <person name="Durkin S.A."/>
            <person name="Daugherty S.C."/>
            <person name="Shetty J."/>
            <person name="Shvartsbeyn A."/>
            <person name="Gebregeorgis E."/>
            <person name="Geer K."/>
            <person name="Tsegaye G."/>
            <person name="Malek J.A."/>
            <person name="Ayodeji B."/>
            <person name="Shatsman S."/>
            <person name="McLeod M.P."/>
            <person name="Smajs D."/>
            <person name="Howell J.K."/>
            <person name="Pal S."/>
            <person name="Amin A."/>
            <person name="Vashisth P."/>
            <person name="McNeill T.Z."/>
            <person name="Xiang Q."/>
            <person name="Sodergren E."/>
            <person name="Baca E."/>
            <person name="Weinstock G.M."/>
            <person name="Norris S.J."/>
            <person name="Fraser C.M."/>
            <person name="Paulsen I.T."/>
        </authorList>
    </citation>
    <scope>NUCLEOTIDE SEQUENCE [LARGE SCALE GENOMIC DNA]</scope>
    <source>
        <strain>ATCC 35405 / DSM 14222 / CIP 103919 / JCM 8153 / KCTC 15104</strain>
    </source>
</reference>
<organism>
    <name type="scientific">Treponema denticola (strain ATCC 35405 / DSM 14222 / CIP 103919 / JCM 8153 / KCTC 15104)</name>
    <dbReference type="NCBI Taxonomy" id="243275"/>
    <lineage>
        <taxon>Bacteria</taxon>
        <taxon>Pseudomonadati</taxon>
        <taxon>Spirochaetota</taxon>
        <taxon>Spirochaetia</taxon>
        <taxon>Spirochaetales</taxon>
        <taxon>Treponemataceae</taxon>
        <taxon>Treponema</taxon>
    </lineage>
</organism>
<gene>
    <name evidence="1" type="primary">rpsG</name>
    <name type="ordered locus">TDE_1048</name>
</gene>
<protein>
    <recommendedName>
        <fullName evidence="1">Small ribosomal subunit protein uS7</fullName>
    </recommendedName>
    <alternativeName>
        <fullName evidence="2">30S ribosomal protein S7</fullName>
    </alternativeName>
</protein>
<comment type="function">
    <text evidence="1">One of the primary rRNA binding proteins, it binds directly to 16S rRNA where it nucleates assembly of the head domain of the 30S subunit. Is located at the subunit interface close to the decoding center, probably blocks exit of the E-site tRNA.</text>
</comment>
<comment type="subunit">
    <text evidence="1">Part of the 30S ribosomal subunit. Contacts proteins S9 and S11.</text>
</comment>
<comment type="similarity">
    <text evidence="1">Belongs to the universal ribosomal protein uS7 family.</text>
</comment>
<name>RS7_TREDE</name>
<proteinExistence type="inferred from homology"/>
<evidence type="ECO:0000255" key="1">
    <source>
        <dbReference type="HAMAP-Rule" id="MF_00480"/>
    </source>
</evidence>
<evidence type="ECO:0000305" key="2"/>
<keyword id="KW-1185">Reference proteome</keyword>
<keyword id="KW-0687">Ribonucleoprotein</keyword>
<keyword id="KW-0689">Ribosomal protein</keyword>
<keyword id="KW-0694">RNA-binding</keyword>
<keyword id="KW-0699">rRNA-binding</keyword>
<keyword id="KW-0820">tRNA-binding</keyword>
<feature type="chain" id="PRO_0000124372" description="Small ribosomal subunit protein uS7">
    <location>
        <begin position="1"/>
        <end position="156"/>
    </location>
</feature>
<accession>Q73NV4</accession>
<sequence length="156" mass="17633">MGRGKITARRPVAPDSKYNSVVVTRFIGRMMLSGKKSITTKIMYDSFDKIKEKTGEEPLAVFSKALDNVKPVVEVKSRRVGGATYQVPMDIPEGRREALAMRWIIGAARKRSGHEMSERLASELIDAYNNTGTAFKKKEEVHRMAEANKAFAHFRW</sequence>